<gene>
    <name evidence="1" type="primary">atpG</name>
    <name type="ordered locus">Minf_2422</name>
</gene>
<name>ATPG_METI4</name>
<sequence length="293" mass="33443">MATTREIRRRIRSIKNTAQITKAMQMVAASKMRKAQQRAIEGRPYHSLFQEIVHSLIPQAGQLIHPLLEARAIQKEIVFVIGTDKGLCGPLNTNLLREIYKHHSPNHLYVSMGKKVRNYLSGLKGSRGENLLLADFELKDNLTFREAKRIGHFLIEKYLHKEIDAISIAYSHFVNPLIQKPIYRRIAPISKVELVKKEKAESPPAESVLPFNFEPSAEELLESLLPFYIHWEIYQAILDNLASEHSARMVAMKSATENAKSLLQDLSLEYNKARQESITKEILEISTAQYAMG</sequence>
<comment type="function">
    <text evidence="1">Produces ATP from ADP in the presence of a proton gradient across the membrane. The gamma chain is believed to be important in regulating ATPase activity and the flow of protons through the CF(0) complex.</text>
</comment>
<comment type="subunit">
    <text evidence="1">F-type ATPases have 2 components, CF(1) - the catalytic core - and CF(0) - the membrane proton channel. CF(1) has five subunits: alpha(3), beta(3), gamma(1), delta(1), epsilon(1). CF(0) has three main subunits: a, b and c.</text>
</comment>
<comment type="subcellular location">
    <subcellularLocation>
        <location evidence="1">Cell membrane</location>
        <topology evidence="1">Peripheral membrane protein</topology>
    </subcellularLocation>
</comment>
<comment type="similarity">
    <text evidence="1">Belongs to the ATPase gamma chain family.</text>
</comment>
<keyword id="KW-0066">ATP synthesis</keyword>
<keyword id="KW-1003">Cell membrane</keyword>
<keyword id="KW-0139">CF(1)</keyword>
<keyword id="KW-0375">Hydrogen ion transport</keyword>
<keyword id="KW-0406">Ion transport</keyword>
<keyword id="KW-0472">Membrane</keyword>
<keyword id="KW-0813">Transport</keyword>
<evidence type="ECO:0000255" key="1">
    <source>
        <dbReference type="HAMAP-Rule" id="MF_00815"/>
    </source>
</evidence>
<proteinExistence type="inferred from homology"/>
<accession>B3E0Z9</accession>
<organism>
    <name type="scientific">Methylacidiphilum infernorum (isolate V4)</name>
    <name type="common">Methylokorus infernorum (strain V4)</name>
    <dbReference type="NCBI Taxonomy" id="481448"/>
    <lineage>
        <taxon>Bacteria</taxon>
        <taxon>Pseudomonadati</taxon>
        <taxon>Verrucomicrobiota</taxon>
        <taxon>Methylacidiphilae</taxon>
        <taxon>Methylacidiphilales</taxon>
        <taxon>Methylacidiphilaceae</taxon>
        <taxon>Methylacidiphilum (ex Ratnadevi et al. 2023)</taxon>
    </lineage>
</organism>
<feature type="chain" id="PRO_1000134176" description="ATP synthase gamma chain">
    <location>
        <begin position="1"/>
        <end position="293"/>
    </location>
</feature>
<protein>
    <recommendedName>
        <fullName evidence="1">ATP synthase gamma chain</fullName>
    </recommendedName>
    <alternativeName>
        <fullName evidence="1">ATP synthase F1 sector gamma subunit</fullName>
    </alternativeName>
    <alternativeName>
        <fullName evidence="1">F-ATPase gamma subunit</fullName>
    </alternativeName>
</protein>
<dbReference type="EMBL" id="CP000975">
    <property type="protein sequence ID" value="ACD84476.1"/>
    <property type="molecule type" value="Genomic_DNA"/>
</dbReference>
<dbReference type="RefSeq" id="WP_012464756.1">
    <property type="nucleotide sequence ID" value="NC_010794.1"/>
</dbReference>
<dbReference type="SMR" id="B3E0Z9"/>
<dbReference type="STRING" id="481448.Minf_2422"/>
<dbReference type="KEGG" id="min:Minf_2422"/>
<dbReference type="eggNOG" id="COG0224">
    <property type="taxonomic scope" value="Bacteria"/>
</dbReference>
<dbReference type="HOGENOM" id="CLU_050669_0_1_0"/>
<dbReference type="OrthoDB" id="9812769at2"/>
<dbReference type="Proteomes" id="UP000009149">
    <property type="component" value="Chromosome"/>
</dbReference>
<dbReference type="GO" id="GO:0005886">
    <property type="term" value="C:plasma membrane"/>
    <property type="evidence" value="ECO:0007669"/>
    <property type="project" value="UniProtKB-SubCell"/>
</dbReference>
<dbReference type="GO" id="GO:0045259">
    <property type="term" value="C:proton-transporting ATP synthase complex"/>
    <property type="evidence" value="ECO:0007669"/>
    <property type="project" value="UniProtKB-KW"/>
</dbReference>
<dbReference type="GO" id="GO:0005524">
    <property type="term" value="F:ATP binding"/>
    <property type="evidence" value="ECO:0007669"/>
    <property type="project" value="UniProtKB-UniRule"/>
</dbReference>
<dbReference type="GO" id="GO:0046933">
    <property type="term" value="F:proton-transporting ATP synthase activity, rotational mechanism"/>
    <property type="evidence" value="ECO:0007669"/>
    <property type="project" value="UniProtKB-UniRule"/>
</dbReference>
<dbReference type="GO" id="GO:0042777">
    <property type="term" value="P:proton motive force-driven plasma membrane ATP synthesis"/>
    <property type="evidence" value="ECO:0007669"/>
    <property type="project" value="UniProtKB-UniRule"/>
</dbReference>
<dbReference type="CDD" id="cd12151">
    <property type="entry name" value="F1-ATPase_gamma"/>
    <property type="match status" value="1"/>
</dbReference>
<dbReference type="Gene3D" id="3.40.1380.10">
    <property type="match status" value="1"/>
</dbReference>
<dbReference type="Gene3D" id="1.10.287.80">
    <property type="entry name" value="ATP synthase, gamma subunit, helix hairpin domain"/>
    <property type="match status" value="1"/>
</dbReference>
<dbReference type="HAMAP" id="MF_00815">
    <property type="entry name" value="ATP_synth_gamma_bact"/>
    <property type="match status" value="1"/>
</dbReference>
<dbReference type="InterPro" id="IPR035968">
    <property type="entry name" value="ATP_synth_F1_ATPase_gsu"/>
</dbReference>
<dbReference type="InterPro" id="IPR000131">
    <property type="entry name" value="ATP_synth_F1_gsu"/>
</dbReference>
<dbReference type="NCBIfam" id="TIGR01146">
    <property type="entry name" value="ATPsyn_F1gamma"/>
    <property type="match status" value="1"/>
</dbReference>
<dbReference type="PANTHER" id="PTHR11693">
    <property type="entry name" value="ATP SYNTHASE GAMMA CHAIN"/>
    <property type="match status" value="1"/>
</dbReference>
<dbReference type="PANTHER" id="PTHR11693:SF22">
    <property type="entry name" value="ATP SYNTHASE SUBUNIT GAMMA, MITOCHONDRIAL"/>
    <property type="match status" value="1"/>
</dbReference>
<dbReference type="Pfam" id="PF00231">
    <property type="entry name" value="ATP-synt"/>
    <property type="match status" value="1"/>
</dbReference>
<dbReference type="PRINTS" id="PR00126">
    <property type="entry name" value="ATPASEGAMMA"/>
</dbReference>
<dbReference type="SUPFAM" id="SSF52943">
    <property type="entry name" value="ATP synthase (F1-ATPase), gamma subunit"/>
    <property type="match status" value="1"/>
</dbReference>
<reference key="1">
    <citation type="journal article" date="2008" name="Biol. Direct">
        <title>Complete genome sequence of the extremely acidophilic methanotroph isolate V4, Methylacidiphilum infernorum, a representative of the bacterial phylum Verrucomicrobia.</title>
        <authorList>
            <person name="Hou S."/>
            <person name="Makarova K.S."/>
            <person name="Saw J.H."/>
            <person name="Senin P."/>
            <person name="Ly B.V."/>
            <person name="Zhou Z."/>
            <person name="Ren Y."/>
            <person name="Wang J."/>
            <person name="Galperin M.Y."/>
            <person name="Omelchenko M.V."/>
            <person name="Wolf Y.I."/>
            <person name="Yutin N."/>
            <person name="Koonin E.V."/>
            <person name="Stott M.B."/>
            <person name="Mountain B.W."/>
            <person name="Crowe M.A."/>
            <person name="Smirnova A.V."/>
            <person name="Dunfield P.F."/>
            <person name="Feng L."/>
            <person name="Wang L."/>
            <person name="Alam M."/>
        </authorList>
    </citation>
    <scope>NUCLEOTIDE SEQUENCE [LARGE SCALE GENOMIC DNA]</scope>
    <source>
        <strain>Isolate V4</strain>
    </source>
</reference>